<comment type="function">
    <text evidence="1">Plays a critical role in the incorporation of lipoproteins in the outer membrane after they are released by the LolA protein.</text>
</comment>
<comment type="subunit">
    <text evidence="1">Monomer.</text>
</comment>
<comment type="subcellular location">
    <subcellularLocation>
        <location evidence="1">Cell outer membrane</location>
        <topology evidence="1">Lipid-anchor</topology>
    </subcellularLocation>
</comment>
<comment type="similarity">
    <text evidence="1">Belongs to the LolB family.</text>
</comment>
<organism>
    <name type="scientific">Escherichia coli (strain SE11)</name>
    <dbReference type="NCBI Taxonomy" id="409438"/>
    <lineage>
        <taxon>Bacteria</taxon>
        <taxon>Pseudomonadati</taxon>
        <taxon>Pseudomonadota</taxon>
        <taxon>Gammaproteobacteria</taxon>
        <taxon>Enterobacterales</taxon>
        <taxon>Enterobacteriaceae</taxon>
        <taxon>Escherichia</taxon>
    </lineage>
</organism>
<feature type="signal peptide" evidence="1">
    <location>
        <begin position="1"/>
        <end position="21"/>
    </location>
</feature>
<feature type="chain" id="PRO_1000100497" description="Outer-membrane lipoprotein LolB">
    <location>
        <begin position="22"/>
        <end position="207"/>
    </location>
</feature>
<feature type="lipid moiety-binding region" description="N-palmitoyl cysteine" evidence="1">
    <location>
        <position position="22"/>
    </location>
</feature>
<feature type="lipid moiety-binding region" description="S-diacylglycerol cysteine" evidence="1">
    <location>
        <position position="22"/>
    </location>
</feature>
<keyword id="KW-0998">Cell outer membrane</keyword>
<keyword id="KW-0143">Chaperone</keyword>
<keyword id="KW-0449">Lipoprotein</keyword>
<keyword id="KW-0472">Membrane</keyword>
<keyword id="KW-0564">Palmitate</keyword>
<keyword id="KW-0653">Protein transport</keyword>
<keyword id="KW-0732">Signal</keyword>
<keyword id="KW-0813">Transport</keyword>
<protein>
    <recommendedName>
        <fullName evidence="1">Outer-membrane lipoprotein LolB</fullName>
    </recommendedName>
</protein>
<evidence type="ECO:0000255" key="1">
    <source>
        <dbReference type="HAMAP-Rule" id="MF_00233"/>
    </source>
</evidence>
<sequence>MPLPDFRLIRLLPLAALVLTACSVTTPKGPGKSPDSPQWRQHQQDVRNLNQYQTRGAFAYISDQQKVYARFFWQQTGQDRYRLLLTNPLGSTELELNAQPGNVQLVDNKGQRYTADDAEEMIGKLTGMPIPLNSLRQWILGLPGDATDYKLDDQYRLSEITYSQNGKNWKVVYGGYDTKTQPAMPANMELTDGGQRIKLKMDNWIVK</sequence>
<gene>
    <name evidence="1" type="primary">lolB</name>
    <name type="ordered locus">ECSE_1259</name>
</gene>
<dbReference type="EMBL" id="AP009240">
    <property type="protein sequence ID" value="BAG76783.1"/>
    <property type="molecule type" value="Genomic_DNA"/>
</dbReference>
<dbReference type="RefSeq" id="WP_001130692.1">
    <property type="nucleotide sequence ID" value="NC_011415.1"/>
</dbReference>
<dbReference type="SMR" id="B6I9S4"/>
<dbReference type="GeneID" id="93775274"/>
<dbReference type="KEGG" id="ecy:ECSE_1259"/>
<dbReference type="HOGENOM" id="CLU_092816_1_1_6"/>
<dbReference type="Proteomes" id="UP000008199">
    <property type="component" value="Chromosome"/>
</dbReference>
<dbReference type="GO" id="GO:0009279">
    <property type="term" value="C:cell outer membrane"/>
    <property type="evidence" value="ECO:0007669"/>
    <property type="project" value="UniProtKB-SubCell"/>
</dbReference>
<dbReference type="GO" id="GO:0044874">
    <property type="term" value="P:lipoprotein localization to outer membrane"/>
    <property type="evidence" value="ECO:0007669"/>
    <property type="project" value="UniProtKB-UniRule"/>
</dbReference>
<dbReference type="GO" id="GO:0015031">
    <property type="term" value="P:protein transport"/>
    <property type="evidence" value="ECO:0007669"/>
    <property type="project" value="UniProtKB-KW"/>
</dbReference>
<dbReference type="CDD" id="cd16326">
    <property type="entry name" value="LolB"/>
    <property type="match status" value="1"/>
</dbReference>
<dbReference type="FunFam" id="2.50.20.10:FF:000002">
    <property type="entry name" value="Outer-membrane lipoprotein LolB"/>
    <property type="match status" value="1"/>
</dbReference>
<dbReference type="Gene3D" id="2.50.20.10">
    <property type="entry name" value="Lipoprotein localisation LolA/LolB/LppX"/>
    <property type="match status" value="1"/>
</dbReference>
<dbReference type="HAMAP" id="MF_00233">
    <property type="entry name" value="LolB"/>
    <property type="match status" value="1"/>
</dbReference>
<dbReference type="InterPro" id="IPR029046">
    <property type="entry name" value="LolA/LolB/LppX"/>
</dbReference>
<dbReference type="InterPro" id="IPR004565">
    <property type="entry name" value="OM_lipoprot_LolB"/>
</dbReference>
<dbReference type="NCBIfam" id="TIGR00548">
    <property type="entry name" value="lolB"/>
    <property type="match status" value="1"/>
</dbReference>
<dbReference type="Pfam" id="PF03550">
    <property type="entry name" value="LolB"/>
    <property type="match status" value="1"/>
</dbReference>
<dbReference type="SUPFAM" id="SSF89392">
    <property type="entry name" value="Prokaryotic lipoproteins and lipoprotein localization factors"/>
    <property type="match status" value="1"/>
</dbReference>
<dbReference type="PROSITE" id="PS51257">
    <property type="entry name" value="PROKAR_LIPOPROTEIN"/>
    <property type="match status" value="1"/>
</dbReference>
<accession>B6I9S4</accession>
<proteinExistence type="inferred from homology"/>
<reference key="1">
    <citation type="journal article" date="2008" name="DNA Res.">
        <title>Complete genome sequence and comparative analysis of the wild-type commensal Escherichia coli strain SE11 isolated from a healthy adult.</title>
        <authorList>
            <person name="Oshima K."/>
            <person name="Toh H."/>
            <person name="Ogura Y."/>
            <person name="Sasamoto H."/>
            <person name="Morita H."/>
            <person name="Park S.-H."/>
            <person name="Ooka T."/>
            <person name="Iyoda S."/>
            <person name="Taylor T.D."/>
            <person name="Hayashi T."/>
            <person name="Itoh K."/>
            <person name="Hattori M."/>
        </authorList>
    </citation>
    <scope>NUCLEOTIDE SEQUENCE [LARGE SCALE GENOMIC DNA]</scope>
    <source>
        <strain>SE11</strain>
    </source>
</reference>
<name>LOLB_ECOSE</name>